<reference key="1">
    <citation type="submission" date="2009-06" db="EMBL/GenBank/DDBJ databases">
        <title>Complete sequence of Thermotogales bacterium TBF 19.5.1.</title>
        <authorList>
            <consortium name="US DOE Joint Genome Institute"/>
            <person name="Lucas S."/>
            <person name="Copeland A."/>
            <person name="Lapidus A."/>
            <person name="Glavina del Rio T."/>
            <person name="Tice H."/>
            <person name="Bruce D."/>
            <person name="Goodwin L."/>
            <person name="Pitluck S."/>
            <person name="Chertkov O."/>
            <person name="Brettin T."/>
            <person name="Detter J.C."/>
            <person name="Han C."/>
            <person name="Schmutz J."/>
            <person name="Larimer F."/>
            <person name="Land M."/>
            <person name="Hauser L."/>
            <person name="Kyrpides N."/>
            <person name="Ovchinnikova G."/>
            <person name="Noll K."/>
        </authorList>
    </citation>
    <scope>NUCLEOTIDE SEQUENCE [LARGE SCALE GENOMIC DNA]</scope>
    <source>
        <strain>ATCC BAA-1733 / DSM 21960 / TBF 19.5.1</strain>
    </source>
</reference>
<gene>
    <name evidence="1" type="primary">pth</name>
    <name type="ordered locus">Kole_1731</name>
</gene>
<proteinExistence type="inferred from homology"/>
<sequence length="190" mass="21293">MLVFIGLGNPGPRYVLTRHNVGFLFVDELLKKFQIGSSYRAETYEAFKLKSQSPAIAVKPLTYMNNSGIAVRDLIRDFGLSQNDRLIVIYDDVWIPLGRLRIRERGSDGGHNGVKSIISSLGTQEFSRIRIGIGPKPDDIDMVSYVLGEFTDSELKVLWKVLDLAISAAQEMFAADFKKVMSRYNSIGVE</sequence>
<protein>
    <recommendedName>
        <fullName evidence="1">Peptidyl-tRNA hydrolase</fullName>
        <shortName evidence="1">Pth</shortName>
        <ecNumber evidence="1">3.1.1.29</ecNumber>
    </recommendedName>
</protein>
<dbReference type="EC" id="3.1.1.29" evidence="1"/>
<dbReference type="EMBL" id="CP001634">
    <property type="protein sequence ID" value="ACR80417.1"/>
    <property type="molecule type" value="Genomic_DNA"/>
</dbReference>
<dbReference type="RefSeq" id="WP_015869061.1">
    <property type="nucleotide sequence ID" value="NC_012785.1"/>
</dbReference>
<dbReference type="SMR" id="C5CFR9"/>
<dbReference type="STRING" id="521045.Kole_1731"/>
<dbReference type="KEGG" id="kol:Kole_1731"/>
<dbReference type="eggNOG" id="COG0193">
    <property type="taxonomic scope" value="Bacteria"/>
</dbReference>
<dbReference type="HOGENOM" id="CLU_062456_4_1_0"/>
<dbReference type="OrthoDB" id="9800507at2"/>
<dbReference type="Proteomes" id="UP000002382">
    <property type="component" value="Chromosome"/>
</dbReference>
<dbReference type="GO" id="GO:0005737">
    <property type="term" value="C:cytoplasm"/>
    <property type="evidence" value="ECO:0007669"/>
    <property type="project" value="UniProtKB-SubCell"/>
</dbReference>
<dbReference type="GO" id="GO:0004045">
    <property type="term" value="F:peptidyl-tRNA hydrolase activity"/>
    <property type="evidence" value="ECO:0007669"/>
    <property type="project" value="UniProtKB-UniRule"/>
</dbReference>
<dbReference type="GO" id="GO:0000049">
    <property type="term" value="F:tRNA binding"/>
    <property type="evidence" value="ECO:0007669"/>
    <property type="project" value="UniProtKB-UniRule"/>
</dbReference>
<dbReference type="GO" id="GO:0006515">
    <property type="term" value="P:protein quality control for misfolded or incompletely synthesized proteins"/>
    <property type="evidence" value="ECO:0007669"/>
    <property type="project" value="UniProtKB-UniRule"/>
</dbReference>
<dbReference type="GO" id="GO:0072344">
    <property type="term" value="P:rescue of stalled ribosome"/>
    <property type="evidence" value="ECO:0007669"/>
    <property type="project" value="UniProtKB-UniRule"/>
</dbReference>
<dbReference type="CDD" id="cd00462">
    <property type="entry name" value="PTH"/>
    <property type="match status" value="1"/>
</dbReference>
<dbReference type="Gene3D" id="3.40.50.1470">
    <property type="entry name" value="Peptidyl-tRNA hydrolase"/>
    <property type="match status" value="1"/>
</dbReference>
<dbReference type="HAMAP" id="MF_00083">
    <property type="entry name" value="Pept_tRNA_hydro_bact"/>
    <property type="match status" value="1"/>
</dbReference>
<dbReference type="InterPro" id="IPR001328">
    <property type="entry name" value="Pept_tRNA_hydro"/>
</dbReference>
<dbReference type="InterPro" id="IPR018171">
    <property type="entry name" value="Pept_tRNA_hydro_CS"/>
</dbReference>
<dbReference type="InterPro" id="IPR036416">
    <property type="entry name" value="Pept_tRNA_hydro_sf"/>
</dbReference>
<dbReference type="NCBIfam" id="TIGR00447">
    <property type="entry name" value="pth"/>
    <property type="match status" value="1"/>
</dbReference>
<dbReference type="PANTHER" id="PTHR17224">
    <property type="entry name" value="PEPTIDYL-TRNA HYDROLASE"/>
    <property type="match status" value="1"/>
</dbReference>
<dbReference type="PANTHER" id="PTHR17224:SF1">
    <property type="entry name" value="PEPTIDYL-TRNA HYDROLASE"/>
    <property type="match status" value="1"/>
</dbReference>
<dbReference type="Pfam" id="PF01195">
    <property type="entry name" value="Pept_tRNA_hydro"/>
    <property type="match status" value="1"/>
</dbReference>
<dbReference type="SUPFAM" id="SSF53178">
    <property type="entry name" value="Peptidyl-tRNA hydrolase-like"/>
    <property type="match status" value="1"/>
</dbReference>
<dbReference type="PROSITE" id="PS01195">
    <property type="entry name" value="PEPT_TRNA_HYDROL_1"/>
    <property type="match status" value="1"/>
</dbReference>
<dbReference type="PROSITE" id="PS01196">
    <property type="entry name" value="PEPT_TRNA_HYDROL_2"/>
    <property type="match status" value="1"/>
</dbReference>
<accession>C5CFR9</accession>
<organism>
    <name type="scientific">Kosmotoga olearia (strain ATCC BAA-1733 / DSM 21960 / TBF 19.5.1)</name>
    <dbReference type="NCBI Taxonomy" id="521045"/>
    <lineage>
        <taxon>Bacteria</taxon>
        <taxon>Thermotogati</taxon>
        <taxon>Thermotogota</taxon>
        <taxon>Thermotogae</taxon>
        <taxon>Kosmotogales</taxon>
        <taxon>Kosmotogaceae</taxon>
        <taxon>Kosmotoga</taxon>
    </lineage>
</organism>
<keyword id="KW-0963">Cytoplasm</keyword>
<keyword id="KW-0378">Hydrolase</keyword>
<keyword id="KW-1185">Reference proteome</keyword>
<keyword id="KW-0694">RNA-binding</keyword>
<keyword id="KW-0820">tRNA-binding</keyword>
<evidence type="ECO:0000255" key="1">
    <source>
        <dbReference type="HAMAP-Rule" id="MF_00083"/>
    </source>
</evidence>
<comment type="function">
    <text evidence="1">Hydrolyzes ribosome-free peptidyl-tRNAs (with 1 or more amino acids incorporated), which drop off the ribosome during protein synthesis, or as a result of ribosome stalling.</text>
</comment>
<comment type="function">
    <text evidence="1">Catalyzes the release of premature peptidyl moieties from peptidyl-tRNA molecules trapped in stalled 50S ribosomal subunits, and thus maintains levels of free tRNAs and 50S ribosomes.</text>
</comment>
<comment type="catalytic activity">
    <reaction evidence="1">
        <text>an N-acyl-L-alpha-aminoacyl-tRNA + H2O = an N-acyl-L-amino acid + a tRNA + H(+)</text>
        <dbReference type="Rhea" id="RHEA:54448"/>
        <dbReference type="Rhea" id="RHEA-COMP:10123"/>
        <dbReference type="Rhea" id="RHEA-COMP:13883"/>
        <dbReference type="ChEBI" id="CHEBI:15377"/>
        <dbReference type="ChEBI" id="CHEBI:15378"/>
        <dbReference type="ChEBI" id="CHEBI:59874"/>
        <dbReference type="ChEBI" id="CHEBI:78442"/>
        <dbReference type="ChEBI" id="CHEBI:138191"/>
        <dbReference type="EC" id="3.1.1.29"/>
    </reaction>
</comment>
<comment type="subunit">
    <text evidence="1">Monomer.</text>
</comment>
<comment type="subcellular location">
    <subcellularLocation>
        <location evidence="1">Cytoplasm</location>
    </subcellularLocation>
</comment>
<comment type="similarity">
    <text evidence="1">Belongs to the PTH family.</text>
</comment>
<feature type="chain" id="PRO_1000202589" description="Peptidyl-tRNA hydrolase">
    <location>
        <begin position="1"/>
        <end position="190"/>
    </location>
</feature>
<feature type="active site" description="Proton acceptor" evidence="1">
    <location>
        <position position="19"/>
    </location>
</feature>
<feature type="binding site" evidence="1">
    <location>
        <position position="14"/>
    </location>
    <ligand>
        <name>tRNA</name>
        <dbReference type="ChEBI" id="CHEBI:17843"/>
    </ligand>
</feature>
<feature type="binding site" evidence="1">
    <location>
        <position position="63"/>
    </location>
    <ligand>
        <name>tRNA</name>
        <dbReference type="ChEBI" id="CHEBI:17843"/>
    </ligand>
</feature>
<feature type="binding site" evidence="1">
    <location>
        <position position="65"/>
    </location>
    <ligand>
        <name>tRNA</name>
        <dbReference type="ChEBI" id="CHEBI:17843"/>
    </ligand>
</feature>
<feature type="binding site" evidence="1">
    <location>
        <position position="112"/>
    </location>
    <ligand>
        <name>tRNA</name>
        <dbReference type="ChEBI" id="CHEBI:17843"/>
    </ligand>
</feature>
<feature type="site" description="Discriminates between blocked and unblocked aminoacyl-tRNA" evidence="1">
    <location>
        <position position="9"/>
    </location>
</feature>
<feature type="site" description="Stabilizes the basic form of H active site to accept a proton" evidence="1">
    <location>
        <position position="91"/>
    </location>
</feature>
<name>PTH_KOSOT</name>